<name>BURPC_ORYSJ</name>
<gene>
    <name type="primary">BURP12</name>
    <name type="ordered locus">Os08g0380100</name>
    <name type="ordered locus">LOC_Os08g29200</name>
    <name type="ORF">P0709D11.28</name>
</gene>
<sequence length="627" mass="66095">MASPPHLPLLLLLLVVVCNAAGGDGARVNPFTAKAAFIRYWNRRVPNNRPHPAFFVAKLSPLQAADAASFAAALPRLLPPLCARAALLCPSASDTETAASLAVGGGGGGGPFKGYSNANFTNYGSGGVGGADGFSAYSPDLNVVGDSFRRYGRDSTRRVDTFASYEAEGNVVTANFTSYAGAATGGSGSFSAYAADTNVPDSTFTNYDAEANGRRREFTSYSQEANHGSNTFAGYGKNGNGLRETFTTYGNDSNVIASGFTNYGESGNGATDTFTAYGKEGNVPDNTFRSYGAGGNAGVDTFKGYRSESNVGDDSFASYAKGANGNAAEFQNYGGSFNPGTVTFKGYGEGSNPNHHIGFKEYAGSNNSFKGYAKSGVDFKEYHNTSSADAATTMSLEAVSSGHQHLKWSPEPGKFFRETELVSGNTMPMPDIKDKMPPRAFLPRDIAKKIPFKPNAVSEVFGVPLDTAMGKAVTSTVAECERAPSRGETKRCATSAEDIVDFAVEMLGNDIVVRSTASTAGSGGQIRLGNVTGVDGGKVTRSVSCHQSLFPYLVYYCHSVPKVRVYEADIMAADSDQKINHGVAICHLDTSDWSPTHGAFIALGGKPGEVEVCHWIFEGDMTWTVAD</sequence>
<proteinExistence type="evidence at transcript level"/>
<feature type="signal peptide" evidence="1">
    <location>
        <begin position="1"/>
        <end position="25"/>
    </location>
</feature>
<feature type="chain" id="PRO_0000375839" description="BURP domain-containing protein 12">
    <location>
        <begin position="26"/>
        <end position="627"/>
    </location>
</feature>
<feature type="domain" description="BURP" evidence="2">
    <location>
        <begin position="415"/>
        <end position="626"/>
    </location>
</feature>
<feature type="glycosylation site" description="N-linked (GlcNAc...) asparagine" evidence="1">
    <location>
        <position position="119"/>
    </location>
</feature>
<feature type="glycosylation site" description="N-linked (GlcNAc...) asparagine" evidence="1">
    <location>
        <position position="175"/>
    </location>
</feature>
<feature type="glycosylation site" description="N-linked (GlcNAc...) asparagine" evidence="1">
    <location>
        <position position="251"/>
    </location>
</feature>
<feature type="glycosylation site" description="N-linked (GlcNAc...) asparagine" evidence="1">
    <location>
        <position position="366"/>
    </location>
</feature>
<feature type="glycosylation site" description="N-linked (GlcNAc...) asparagine" evidence="1">
    <location>
        <position position="384"/>
    </location>
</feature>
<feature type="glycosylation site" description="N-linked (GlcNAc...) asparagine" evidence="1">
    <location>
        <position position="530"/>
    </location>
</feature>
<comment type="tissue specificity">
    <text evidence="3">Expressed in stems, leaves, shoot and panicles.</text>
</comment>
<reference key="1">
    <citation type="journal article" date="2005" name="Nature">
        <title>The map-based sequence of the rice genome.</title>
        <authorList>
            <consortium name="International rice genome sequencing project (IRGSP)"/>
        </authorList>
    </citation>
    <scope>NUCLEOTIDE SEQUENCE [LARGE SCALE GENOMIC DNA]</scope>
    <source>
        <strain>cv. Nipponbare</strain>
    </source>
</reference>
<reference key="2">
    <citation type="journal article" date="2008" name="Nucleic Acids Res.">
        <title>The rice annotation project database (RAP-DB): 2008 update.</title>
        <authorList>
            <consortium name="The rice annotation project (RAP)"/>
        </authorList>
    </citation>
    <scope>GENOME REANNOTATION</scope>
    <source>
        <strain>cv. Nipponbare</strain>
    </source>
</reference>
<reference key="3">
    <citation type="journal article" date="2013" name="Rice">
        <title>Improvement of the Oryza sativa Nipponbare reference genome using next generation sequence and optical map data.</title>
        <authorList>
            <person name="Kawahara Y."/>
            <person name="de la Bastide M."/>
            <person name="Hamilton J.P."/>
            <person name="Kanamori H."/>
            <person name="McCombie W.R."/>
            <person name="Ouyang S."/>
            <person name="Schwartz D.C."/>
            <person name="Tanaka T."/>
            <person name="Wu J."/>
            <person name="Zhou S."/>
            <person name="Childs K.L."/>
            <person name="Davidson R.M."/>
            <person name="Lin H."/>
            <person name="Quesada-Ocampo L."/>
            <person name="Vaillancourt B."/>
            <person name="Sakai H."/>
            <person name="Lee S.S."/>
            <person name="Kim J."/>
            <person name="Numa H."/>
            <person name="Itoh T."/>
            <person name="Buell C.R."/>
            <person name="Matsumoto T."/>
        </authorList>
    </citation>
    <scope>GENOME REANNOTATION</scope>
    <source>
        <strain>cv. Nipponbare</strain>
    </source>
</reference>
<reference key="4">
    <citation type="journal article" date="2003" name="Science">
        <title>Collection, mapping, and annotation of over 28,000 cDNA clones from japonica rice.</title>
        <authorList>
            <consortium name="The rice full-length cDNA consortium"/>
        </authorList>
    </citation>
    <scope>NUCLEOTIDE SEQUENCE [LARGE SCALE MRNA]</scope>
    <source>
        <strain>cv. Nipponbare</strain>
    </source>
</reference>
<reference key="5">
    <citation type="journal article" date="2009" name="Planta">
        <title>Genome-wide identification of BURP domain-containing genes in rice reveals a gene family with diverse structures and responses to abiotic stresses.</title>
        <authorList>
            <person name="Ding X."/>
            <person name="Hou X."/>
            <person name="Xie K."/>
            <person name="Xiong L."/>
        </authorList>
    </citation>
    <scope>TISSUE SPECIFICITY</scope>
    <scope>GENE NOMENCLATURE</scope>
</reference>
<evidence type="ECO:0000255" key="1"/>
<evidence type="ECO:0000255" key="2">
    <source>
        <dbReference type="PROSITE-ProRule" id="PRU00604"/>
    </source>
</evidence>
<evidence type="ECO:0000269" key="3">
    <source>
    </source>
</evidence>
<keyword id="KW-0325">Glycoprotein</keyword>
<keyword id="KW-1185">Reference proteome</keyword>
<keyword id="KW-0732">Signal</keyword>
<accession>Q6ZA27</accession>
<accession>A0A0P0XFE7</accession>
<protein>
    <recommendedName>
        <fullName>BURP domain-containing protein 12</fullName>
        <shortName>OsBURP12</shortName>
    </recommendedName>
</protein>
<dbReference type="EMBL" id="AP004675">
    <property type="protein sequence ID" value="BAD05416.1"/>
    <property type="molecule type" value="Genomic_DNA"/>
</dbReference>
<dbReference type="EMBL" id="AP008214">
    <property type="protein sequence ID" value="BAF23606.1"/>
    <property type="molecule type" value="Genomic_DNA"/>
</dbReference>
<dbReference type="EMBL" id="AP014964">
    <property type="protein sequence ID" value="BAT05223.1"/>
    <property type="molecule type" value="Genomic_DNA"/>
</dbReference>
<dbReference type="EMBL" id="AK101838">
    <property type="protein sequence ID" value="BAG95253.1"/>
    <property type="molecule type" value="mRNA"/>
</dbReference>
<dbReference type="EMBL" id="AK103679">
    <property type="protein sequence ID" value="BAG96203.1"/>
    <property type="molecule type" value="mRNA"/>
</dbReference>
<dbReference type="RefSeq" id="XP_015648835.1">
    <property type="nucleotide sequence ID" value="XM_015793349.1"/>
</dbReference>
<dbReference type="SMR" id="Q6ZA27"/>
<dbReference type="FunCoup" id="Q6ZA27">
    <property type="interactions" value="1530"/>
</dbReference>
<dbReference type="STRING" id="39947.Q6ZA27"/>
<dbReference type="GlyCosmos" id="Q6ZA27">
    <property type="glycosylation" value="6 sites, No reported glycans"/>
</dbReference>
<dbReference type="PaxDb" id="39947-Q6ZA27"/>
<dbReference type="EnsemblPlants" id="Os08t0380100-01">
    <property type="protein sequence ID" value="Os08t0380100-01"/>
    <property type="gene ID" value="Os08g0380100"/>
</dbReference>
<dbReference type="EnsemblPlants" id="Os08t0380100-02">
    <property type="protein sequence ID" value="Os08t0380100-02"/>
    <property type="gene ID" value="Os08g0380100"/>
</dbReference>
<dbReference type="Gramene" id="Os08t0380100-01">
    <property type="protein sequence ID" value="Os08t0380100-01"/>
    <property type="gene ID" value="Os08g0380100"/>
</dbReference>
<dbReference type="Gramene" id="Os08t0380100-02">
    <property type="protein sequence ID" value="Os08t0380100-02"/>
    <property type="gene ID" value="Os08g0380100"/>
</dbReference>
<dbReference type="KEGG" id="dosa:Os08g0380100"/>
<dbReference type="eggNOG" id="ENOG502QT2V">
    <property type="taxonomic scope" value="Eukaryota"/>
</dbReference>
<dbReference type="HOGENOM" id="CLU_011822_5_0_1"/>
<dbReference type="InParanoid" id="Q6ZA27"/>
<dbReference type="OMA" id="MTWAMAD"/>
<dbReference type="OrthoDB" id="773062at2759"/>
<dbReference type="Proteomes" id="UP000000763">
    <property type="component" value="Chromosome 8"/>
</dbReference>
<dbReference type="Proteomes" id="UP000059680">
    <property type="component" value="Chromosome 8"/>
</dbReference>
<dbReference type="InterPro" id="IPR004873">
    <property type="entry name" value="BURP_dom"/>
</dbReference>
<dbReference type="InterPro" id="IPR051897">
    <property type="entry name" value="PG-associated_BURP"/>
</dbReference>
<dbReference type="PANTHER" id="PTHR31458">
    <property type="entry name" value="POLYGALACTURONASE 1 BETA-LIKE PROTEIN 2"/>
    <property type="match status" value="1"/>
</dbReference>
<dbReference type="PANTHER" id="PTHR31458:SF2">
    <property type="entry name" value="POLYGALACTURONASE 1 BETA-LIKE PROTEIN 2"/>
    <property type="match status" value="1"/>
</dbReference>
<dbReference type="Pfam" id="PF03181">
    <property type="entry name" value="BURP"/>
    <property type="match status" value="1"/>
</dbReference>
<dbReference type="SMART" id="SM01045">
    <property type="entry name" value="BURP"/>
    <property type="match status" value="1"/>
</dbReference>
<dbReference type="PROSITE" id="PS51277">
    <property type="entry name" value="BURP"/>
    <property type="match status" value="1"/>
</dbReference>
<organism>
    <name type="scientific">Oryza sativa subsp. japonica</name>
    <name type="common">Rice</name>
    <dbReference type="NCBI Taxonomy" id="39947"/>
    <lineage>
        <taxon>Eukaryota</taxon>
        <taxon>Viridiplantae</taxon>
        <taxon>Streptophyta</taxon>
        <taxon>Embryophyta</taxon>
        <taxon>Tracheophyta</taxon>
        <taxon>Spermatophyta</taxon>
        <taxon>Magnoliopsida</taxon>
        <taxon>Liliopsida</taxon>
        <taxon>Poales</taxon>
        <taxon>Poaceae</taxon>
        <taxon>BOP clade</taxon>
        <taxon>Oryzoideae</taxon>
        <taxon>Oryzeae</taxon>
        <taxon>Oryzinae</taxon>
        <taxon>Oryza</taxon>
        <taxon>Oryza sativa</taxon>
    </lineage>
</organism>